<organism>
    <name type="scientific">Yersinia enterocolitica serotype O:8 / biotype 1B (strain NCTC 13174 / 8081)</name>
    <dbReference type="NCBI Taxonomy" id="393305"/>
    <lineage>
        <taxon>Bacteria</taxon>
        <taxon>Pseudomonadati</taxon>
        <taxon>Pseudomonadota</taxon>
        <taxon>Gammaproteobacteria</taxon>
        <taxon>Enterobacterales</taxon>
        <taxon>Yersiniaceae</taxon>
        <taxon>Yersinia</taxon>
    </lineage>
</organism>
<evidence type="ECO:0000255" key="1">
    <source>
        <dbReference type="HAMAP-Rule" id="MF_00558"/>
    </source>
</evidence>
<accession>A1JRB6</accession>
<protein>
    <recommendedName>
        <fullName evidence="1">Succinate--CoA ligase [ADP-forming] subunit beta</fullName>
        <ecNumber evidence="1">6.2.1.5</ecNumber>
    </recommendedName>
    <alternativeName>
        <fullName evidence="1">Succinyl-CoA synthetase subunit beta</fullName>
        <shortName evidence="1">SCS-beta</shortName>
    </alternativeName>
</protein>
<name>SUCC_YERE8</name>
<feature type="chain" id="PRO_1000082265" description="Succinate--CoA ligase [ADP-forming] subunit beta">
    <location>
        <begin position="1"/>
        <end position="388"/>
    </location>
</feature>
<feature type="domain" description="ATP-grasp" evidence="1">
    <location>
        <begin position="9"/>
        <end position="244"/>
    </location>
</feature>
<feature type="binding site" evidence="1">
    <location>
        <position position="46"/>
    </location>
    <ligand>
        <name>ATP</name>
        <dbReference type="ChEBI" id="CHEBI:30616"/>
    </ligand>
</feature>
<feature type="binding site" evidence="1">
    <location>
        <begin position="53"/>
        <end position="55"/>
    </location>
    <ligand>
        <name>ATP</name>
        <dbReference type="ChEBI" id="CHEBI:30616"/>
    </ligand>
</feature>
<feature type="binding site" evidence="1">
    <location>
        <position position="99"/>
    </location>
    <ligand>
        <name>ATP</name>
        <dbReference type="ChEBI" id="CHEBI:30616"/>
    </ligand>
</feature>
<feature type="binding site" evidence="1">
    <location>
        <position position="102"/>
    </location>
    <ligand>
        <name>ATP</name>
        <dbReference type="ChEBI" id="CHEBI:30616"/>
    </ligand>
</feature>
<feature type="binding site" evidence="1">
    <location>
        <position position="107"/>
    </location>
    <ligand>
        <name>ATP</name>
        <dbReference type="ChEBI" id="CHEBI:30616"/>
    </ligand>
</feature>
<feature type="binding site" evidence="1">
    <location>
        <position position="199"/>
    </location>
    <ligand>
        <name>Mg(2+)</name>
        <dbReference type="ChEBI" id="CHEBI:18420"/>
    </ligand>
</feature>
<feature type="binding site" evidence="1">
    <location>
        <position position="213"/>
    </location>
    <ligand>
        <name>Mg(2+)</name>
        <dbReference type="ChEBI" id="CHEBI:18420"/>
    </ligand>
</feature>
<feature type="binding site" evidence="1">
    <location>
        <position position="264"/>
    </location>
    <ligand>
        <name>substrate</name>
        <note>ligand shared with subunit alpha</note>
    </ligand>
</feature>
<feature type="binding site" evidence="1">
    <location>
        <begin position="321"/>
        <end position="323"/>
    </location>
    <ligand>
        <name>substrate</name>
        <note>ligand shared with subunit alpha</note>
    </ligand>
</feature>
<reference key="1">
    <citation type="journal article" date="2006" name="PLoS Genet.">
        <title>The complete genome sequence and comparative genome analysis of the high pathogenicity Yersinia enterocolitica strain 8081.</title>
        <authorList>
            <person name="Thomson N.R."/>
            <person name="Howard S."/>
            <person name="Wren B.W."/>
            <person name="Holden M.T.G."/>
            <person name="Crossman L."/>
            <person name="Challis G.L."/>
            <person name="Churcher C."/>
            <person name="Mungall K."/>
            <person name="Brooks K."/>
            <person name="Chillingworth T."/>
            <person name="Feltwell T."/>
            <person name="Abdellah Z."/>
            <person name="Hauser H."/>
            <person name="Jagels K."/>
            <person name="Maddison M."/>
            <person name="Moule S."/>
            <person name="Sanders M."/>
            <person name="Whitehead S."/>
            <person name="Quail M.A."/>
            <person name="Dougan G."/>
            <person name="Parkhill J."/>
            <person name="Prentice M.B."/>
        </authorList>
    </citation>
    <scope>NUCLEOTIDE SEQUENCE [LARGE SCALE GENOMIC DNA]</scope>
    <source>
        <strain>NCTC 13174 / 8081</strain>
    </source>
</reference>
<comment type="function">
    <text evidence="1">Succinyl-CoA synthetase functions in the citric acid cycle (TCA), coupling the hydrolysis of succinyl-CoA to the synthesis of either ATP or GTP and thus represents the only step of substrate-level phosphorylation in the TCA. The beta subunit provides nucleotide specificity of the enzyme and binds the substrate succinate, while the binding sites for coenzyme A and phosphate are found in the alpha subunit.</text>
</comment>
<comment type="catalytic activity">
    <reaction evidence="1">
        <text>succinate + ATP + CoA = succinyl-CoA + ADP + phosphate</text>
        <dbReference type="Rhea" id="RHEA:17661"/>
        <dbReference type="ChEBI" id="CHEBI:30031"/>
        <dbReference type="ChEBI" id="CHEBI:30616"/>
        <dbReference type="ChEBI" id="CHEBI:43474"/>
        <dbReference type="ChEBI" id="CHEBI:57287"/>
        <dbReference type="ChEBI" id="CHEBI:57292"/>
        <dbReference type="ChEBI" id="CHEBI:456216"/>
        <dbReference type="EC" id="6.2.1.5"/>
    </reaction>
    <physiologicalReaction direction="right-to-left" evidence="1">
        <dbReference type="Rhea" id="RHEA:17663"/>
    </physiologicalReaction>
</comment>
<comment type="catalytic activity">
    <reaction evidence="1">
        <text>GTP + succinate + CoA = succinyl-CoA + GDP + phosphate</text>
        <dbReference type="Rhea" id="RHEA:22120"/>
        <dbReference type="ChEBI" id="CHEBI:30031"/>
        <dbReference type="ChEBI" id="CHEBI:37565"/>
        <dbReference type="ChEBI" id="CHEBI:43474"/>
        <dbReference type="ChEBI" id="CHEBI:57287"/>
        <dbReference type="ChEBI" id="CHEBI:57292"/>
        <dbReference type="ChEBI" id="CHEBI:58189"/>
    </reaction>
    <physiologicalReaction direction="right-to-left" evidence="1">
        <dbReference type="Rhea" id="RHEA:22122"/>
    </physiologicalReaction>
</comment>
<comment type="cofactor">
    <cofactor evidence="1">
        <name>Mg(2+)</name>
        <dbReference type="ChEBI" id="CHEBI:18420"/>
    </cofactor>
    <text evidence="1">Binds 1 Mg(2+) ion per subunit.</text>
</comment>
<comment type="pathway">
    <text evidence="1">Carbohydrate metabolism; tricarboxylic acid cycle; succinate from succinyl-CoA (ligase route): step 1/1.</text>
</comment>
<comment type="subunit">
    <text evidence="1">Heterotetramer of two alpha and two beta subunits.</text>
</comment>
<comment type="similarity">
    <text evidence="1">Belongs to the succinate/malate CoA ligase beta subunit family.</text>
</comment>
<proteinExistence type="inferred from homology"/>
<keyword id="KW-0067">ATP-binding</keyword>
<keyword id="KW-0436">Ligase</keyword>
<keyword id="KW-0460">Magnesium</keyword>
<keyword id="KW-0479">Metal-binding</keyword>
<keyword id="KW-0547">Nucleotide-binding</keyword>
<keyword id="KW-0816">Tricarboxylic acid cycle</keyword>
<dbReference type="EC" id="6.2.1.5" evidence="1"/>
<dbReference type="EMBL" id="AM286415">
    <property type="protein sequence ID" value="CAL12980.1"/>
    <property type="molecule type" value="Genomic_DNA"/>
</dbReference>
<dbReference type="RefSeq" id="WP_005168022.1">
    <property type="nucleotide sequence ID" value="NC_008800.1"/>
</dbReference>
<dbReference type="RefSeq" id="YP_001007130.1">
    <property type="nucleotide sequence ID" value="NC_008800.1"/>
</dbReference>
<dbReference type="SMR" id="A1JRB6"/>
<dbReference type="KEGG" id="yen:YE2942"/>
<dbReference type="PATRIC" id="fig|393305.7.peg.3130"/>
<dbReference type="eggNOG" id="COG0045">
    <property type="taxonomic scope" value="Bacteria"/>
</dbReference>
<dbReference type="HOGENOM" id="CLU_037430_0_2_6"/>
<dbReference type="OrthoDB" id="9802602at2"/>
<dbReference type="UniPathway" id="UPA00223">
    <property type="reaction ID" value="UER00999"/>
</dbReference>
<dbReference type="Proteomes" id="UP000000642">
    <property type="component" value="Chromosome"/>
</dbReference>
<dbReference type="GO" id="GO:0005829">
    <property type="term" value="C:cytosol"/>
    <property type="evidence" value="ECO:0007669"/>
    <property type="project" value="TreeGrafter"/>
</dbReference>
<dbReference type="GO" id="GO:0042709">
    <property type="term" value="C:succinate-CoA ligase complex"/>
    <property type="evidence" value="ECO:0007669"/>
    <property type="project" value="TreeGrafter"/>
</dbReference>
<dbReference type="GO" id="GO:0005524">
    <property type="term" value="F:ATP binding"/>
    <property type="evidence" value="ECO:0007669"/>
    <property type="project" value="UniProtKB-UniRule"/>
</dbReference>
<dbReference type="GO" id="GO:0000287">
    <property type="term" value="F:magnesium ion binding"/>
    <property type="evidence" value="ECO:0007669"/>
    <property type="project" value="UniProtKB-UniRule"/>
</dbReference>
<dbReference type="GO" id="GO:0004775">
    <property type="term" value="F:succinate-CoA ligase (ADP-forming) activity"/>
    <property type="evidence" value="ECO:0007669"/>
    <property type="project" value="UniProtKB-UniRule"/>
</dbReference>
<dbReference type="GO" id="GO:0004776">
    <property type="term" value="F:succinate-CoA ligase (GDP-forming) activity"/>
    <property type="evidence" value="ECO:0007669"/>
    <property type="project" value="RHEA"/>
</dbReference>
<dbReference type="GO" id="GO:0006104">
    <property type="term" value="P:succinyl-CoA metabolic process"/>
    <property type="evidence" value="ECO:0007669"/>
    <property type="project" value="TreeGrafter"/>
</dbReference>
<dbReference type="GO" id="GO:0006099">
    <property type="term" value="P:tricarboxylic acid cycle"/>
    <property type="evidence" value="ECO:0007669"/>
    <property type="project" value="UniProtKB-UniRule"/>
</dbReference>
<dbReference type="FunFam" id="3.30.1490.20:FF:000002">
    <property type="entry name" value="Succinate--CoA ligase [ADP-forming] subunit beta"/>
    <property type="match status" value="1"/>
</dbReference>
<dbReference type="FunFam" id="3.30.470.20:FF:000002">
    <property type="entry name" value="Succinate--CoA ligase [ADP-forming] subunit beta"/>
    <property type="match status" value="1"/>
</dbReference>
<dbReference type="FunFam" id="3.40.50.261:FF:000001">
    <property type="entry name" value="Succinate--CoA ligase [ADP-forming] subunit beta"/>
    <property type="match status" value="1"/>
</dbReference>
<dbReference type="Gene3D" id="3.30.1490.20">
    <property type="entry name" value="ATP-grasp fold, A domain"/>
    <property type="match status" value="1"/>
</dbReference>
<dbReference type="Gene3D" id="3.30.470.20">
    <property type="entry name" value="ATP-grasp fold, B domain"/>
    <property type="match status" value="1"/>
</dbReference>
<dbReference type="Gene3D" id="3.40.50.261">
    <property type="entry name" value="Succinyl-CoA synthetase domains"/>
    <property type="match status" value="1"/>
</dbReference>
<dbReference type="HAMAP" id="MF_00558">
    <property type="entry name" value="Succ_CoA_beta"/>
    <property type="match status" value="1"/>
</dbReference>
<dbReference type="InterPro" id="IPR011761">
    <property type="entry name" value="ATP-grasp"/>
</dbReference>
<dbReference type="InterPro" id="IPR013650">
    <property type="entry name" value="ATP-grasp_succ-CoA_synth-type"/>
</dbReference>
<dbReference type="InterPro" id="IPR013815">
    <property type="entry name" value="ATP_grasp_subdomain_1"/>
</dbReference>
<dbReference type="InterPro" id="IPR017866">
    <property type="entry name" value="Succ-CoA_synthase_bsu_CS"/>
</dbReference>
<dbReference type="InterPro" id="IPR005811">
    <property type="entry name" value="SUCC_ACL_C"/>
</dbReference>
<dbReference type="InterPro" id="IPR005809">
    <property type="entry name" value="Succ_CoA_ligase-like_bsu"/>
</dbReference>
<dbReference type="InterPro" id="IPR016102">
    <property type="entry name" value="Succinyl-CoA_synth-like"/>
</dbReference>
<dbReference type="NCBIfam" id="NF001913">
    <property type="entry name" value="PRK00696.1"/>
    <property type="match status" value="1"/>
</dbReference>
<dbReference type="NCBIfam" id="TIGR01016">
    <property type="entry name" value="sucCoAbeta"/>
    <property type="match status" value="1"/>
</dbReference>
<dbReference type="PANTHER" id="PTHR11815:SF10">
    <property type="entry name" value="SUCCINATE--COA LIGASE [GDP-FORMING] SUBUNIT BETA, MITOCHONDRIAL"/>
    <property type="match status" value="1"/>
</dbReference>
<dbReference type="PANTHER" id="PTHR11815">
    <property type="entry name" value="SUCCINYL-COA SYNTHETASE BETA CHAIN"/>
    <property type="match status" value="1"/>
</dbReference>
<dbReference type="Pfam" id="PF08442">
    <property type="entry name" value="ATP-grasp_2"/>
    <property type="match status" value="1"/>
</dbReference>
<dbReference type="Pfam" id="PF00549">
    <property type="entry name" value="Ligase_CoA"/>
    <property type="match status" value="1"/>
</dbReference>
<dbReference type="PIRSF" id="PIRSF001554">
    <property type="entry name" value="SucCS_beta"/>
    <property type="match status" value="1"/>
</dbReference>
<dbReference type="SUPFAM" id="SSF56059">
    <property type="entry name" value="Glutathione synthetase ATP-binding domain-like"/>
    <property type="match status" value="1"/>
</dbReference>
<dbReference type="SUPFAM" id="SSF52210">
    <property type="entry name" value="Succinyl-CoA synthetase domains"/>
    <property type="match status" value="1"/>
</dbReference>
<dbReference type="PROSITE" id="PS50975">
    <property type="entry name" value="ATP_GRASP"/>
    <property type="match status" value="1"/>
</dbReference>
<dbReference type="PROSITE" id="PS01217">
    <property type="entry name" value="SUCCINYL_COA_LIG_3"/>
    <property type="match status" value="1"/>
</dbReference>
<gene>
    <name evidence="1" type="primary">sucC</name>
    <name type="ordered locus">YE2942</name>
</gene>
<sequence length="388" mass="41537">MNLHEYQAKQLFARYGMPAPTGYACTTPREAEEAASKIGAGPWVVKCQVHAGGRGKAGGVKLVNSKEDIRAFAEQWLGKKLVTYQTDVHGQPVHQILVEAATDIDKELYLGAVIDRSSRRVVFMASTEGGVEIEKVAEETPELIHKVALDPLTGPQPYQGRELAFKLGLTGKQVAQFTKIFMGLATLFLERDLAMVEINPLVITKQGDLVCLDGKLGADGNALFRQPELREMRDKSQEDEREAQAAQWELNYVALDGNIGCMVNGAGLAMGTMDIVKLHGGEPANFLDVGGGATKERVTEAFKIILSDDKVKAVFVNIFGGIVRCDLIADGIIGAVEEVGVNVPVVVRLEGNNAELGAKKLADSGLNIIAATSLTDAAQQVVAAVGAK</sequence>